<dbReference type="EMBL" id="AY336973">
    <property type="protein sequence ID" value="AAQ16149.1"/>
    <property type="molecule type" value="mRNA"/>
</dbReference>
<dbReference type="RefSeq" id="NP_892000.1">
    <property type="nucleotide sequence ID" value="NM_182955.1"/>
</dbReference>
<dbReference type="RefSeq" id="XP_006254526.1">
    <property type="nucleotide sequence ID" value="XM_006254464.3"/>
</dbReference>
<dbReference type="RefSeq" id="XP_006254527.1">
    <property type="nucleotide sequence ID" value="XM_006254465.3"/>
</dbReference>
<dbReference type="SMR" id="Q7TNK3"/>
<dbReference type="FunCoup" id="Q7TNK3">
    <property type="interactions" value="1265"/>
</dbReference>
<dbReference type="STRING" id="10116.ENSRNOP00000022304"/>
<dbReference type="PhosphoSitePlus" id="Q7TNK3"/>
<dbReference type="PaxDb" id="10116-ENSRNOP00000022304"/>
<dbReference type="Ensembl" id="ENSRNOT00000022304.5">
    <property type="protein sequence ID" value="ENSRNOP00000022304.2"/>
    <property type="gene ID" value="ENSRNOG00000016562.6"/>
</dbReference>
<dbReference type="GeneID" id="360204"/>
<dbReference type="KEGG" id="rno:360204"/>
<dbReference type="UCSC" id="RGD:727963">
    <property type="organism name" value="rat"/>
</dbReference>
<dbReference type="AGR" id="RGD:727963"/>
<dbReference type="CTD" id="59057"/>
<dbReference type="RGD" id="727963">
    <property type="gene designation" value="Zfp191"/>
</dbReference>
<dbReference type="eggNOG" id="KOG1721">
    <property type="taxonomic scope" value="Eukaryota"/>
</dbReference>
<dbReference type="GeneTree" id="ENSGT00940000161396"/>
<dbReference type="HOGENOM" id="CLU_002678_49_3_1"/>
<dbReference type="InParanoid" id="Q7TNK3"/>
<dbReference type="OMA" id="VAQIFKY"/>
<dbReference type="OrthoDB" id="427030at2759"/>
<dbReference type="PhylomeDB" id="Q7TNK3"/>
<dbReference type="TreeFam" id="TF338304"/>
<dbReference type="PRO" id="PR:Q7TNK3"/>
<dbReference type="Proteomes" id="UP000002494">
    <property type="component" value="Chromosome 18"/>
</dbReference>
<dbReference type="Bgee" id="ENSRNOG00000016562">
    <property type="expression patterns" value="Expressed in quadriceps femoris and 18 other cell types or tissues"/>
</dbReference>
<dbReference type="GO" id="GO:0005634">
    <property type="term" value="C:nucleus"/>
    <property type="evidence" value="ECO:0000250"/>
    <property type="project" value="UniProtKB"/>
</dbReference>
<dbReference type="GO" id="GO:0001228">
    <property type="term" value="F:DNA-binding transcription activator activity, RNA polymerase II-specific"/>
    <property type="evidence" value="ECO:0000266"/>
    <property type="project" value="RGD"/>
</dbReference>
<dbReference type="GO" id="GO:0000981">
    <property type="term" value="F:DNA-binding transcription factor activity, RNA polymerase II-specific"/>
    <property type="evidence" value="ECO:0000318"/>
    <property type="project" value="GO_Central"/>
</dbReference>
<dbReference type="GO" id="GO:0042802">
    <property type="term" value="F:identical protein binding"/>
    <property type="evidence" value="ECO:0000266"/>
    <property type="project" value="RGD"/>
</dbReference>
<dbReference type="GO" id="GO:0000978">
    <property type="term" value="F:RNA polymerase II cis-regulatory region sequence-specific DNA binding"/>
    <property type="evidence" value="ECO:0000318"/>
    <property type="project" value="GO_Central"/>
</dbReference>
<dbReference type="GO" id="GO:0043565">
    <property type="term" value="F:sequence-specific DNA binding"/>
    <property type="evidence" value="ECO:0000250"/>
    <property type="project" value="UniProtKB"/>
</dbReference>
<dbReference type="GO" id="GO:0008270">
    <property type="term" value="F:zinc ion binding"/>
    <property type="evidence" value="ECO:0007669"/>
    <property type="project" value="UniProtKB-KW"/>
</dbReference>
<dbReference type="GO" id="GO:0042552">
    <property type="term" value="P:myelination"/>
    <property type="evidence" value="ECO:0000250"/>
    <property type="project" value="UniProtKB"/>
</dbReference>
<dbReference type="GO" id="GO:0045892">
    <property type="term" value="P:negative regulation of DNA-templated transcription"/>
    <property type="evidence" value="ECO:0000266"/>
    <property type="project" value="RGD"/>
</dbReference>
<dbReference type="GO" id="GO:0045944">
    <property type="term" value="P:positive regulation of transcription by RNA polymerase II"/>
    <property type="evidence" value="ECO:0000266"/>
    <property type="project" value="RGD"/>
</dbReference>
<dbReference type="GO" id="GO:0006357">
    <property type="term" value="P:regulation of transcription by RNA polymerase II"/>
    <property type="evidence" value="ECO:0000318"/>
    <property type="project" value="GO_Central"/>
</dbReference>
<dbReference type="CDD" id="cd07936">
    <property type="entry name" value="SCAN"/>
    <property type="match status" value="1"/>
</dbReference>
<dbReference type="FunFam" id="3.30.160.60:FF:000824">
    <property type="entry name" value="Zinc finger protein 184"/>
    <property type="match status" value="1"/>
</dbReference>
<dbReference type="FunFam" id="3.30.160.60:FF:000358">
    <property type="entry name" value="zinc finger protein 24"/>
    <property type="match status" value="1"/>
</dbReference>
<dbReference type="FunFam" id="3.30.160.60:FF:000632">
    <property type="entry name" value="zinc finger protein 24 isoform X1"/>
    <property type="match status" value="1"/>
</dbReference>
<dbReference type="FunFam" id="1.10.4020.10:FF:000001">
    <property type="entry name" value="zinc finger protein 263 isoform X1"/>
    <property type="match status" value="1"/>
</dbReference>
<dbReference type="FunFam" id="3.30.160.60:FF:000953">
    <property type="entry name" value="Zinc finger protein 691"/>
    <property type="match status" value="1"/>
</dbReference>
<dbReference type="Gene3D" id="3.30.160.60">
    <property type="entry name" value="Classic Zinc Finger"/>
    <property type="match status" value="4"/>
</dbReference>
<dbReference type="Gene3D" id="1.10.4020.10">
    <property type="entry name" value="DNA breaking-rejoining enzymes"/>
    <property type="match status" value="1"/>
</dbReference>
<dbReference type="InterPro" id="IPR003309">
    <property type="entry name" value="SCAN_dom"/>
</dbReference>
<dbReference type="InterPro" id="IPR038269">
    <property type="entry name" value="SCAN_sf"/>
</dbReference>
<dbReference type="InterPro" id="IPR036236">
    <property type="entry name" value="Znf_C2H2_sf"/>
</dbReference>
<dbReference type="InterPro" id="IPR013087">
    <property type="entry name" value="Znf_C2H2_type"/>
</dbReference>
<dbReference type="PANTHER" id="PTHR24393">
    <property type="entry name" value="ZINC FINGER PROTEIN"/>
    <property type="match status" value="1"/>
</dbReference>
<dbReference type="PANTHER" id="PTHR24393:SF100">
    <property type="entry name" value="ZINC FINGER PROTEIN-RELATED"/>
    <property type="match status" value="1"/>
</dbReference>
<dbReference type="Pfam" id="PF02023">
    <property type="entry name" value="SCAN"/>
    <property type="match status" value="1"/>
</dbReference>
<dbReference type="Pfam" id="PF00096">
    <property type="entry name" value="zf-C2H2"/>
    <property type="match status" value="4"/>
</dbReference>
<dbReference type="SMART" id="SM00431">
    <property type="entry name" value="SCAN"/>
    <property type="match status" value="1"/>
</dbReference>
<dbReference type="SMART" id="SM00355">
    <property type="entry name" value="ZnF_C2H2"/>
    <property type="match status" value="4"/>
</dbReference>
<dbReference type="SUPFAM" id="SSF57667">
    <property type="entry name" value="beta-beta-alpha zinc fingers"/>
    <property type="match status" value="3"/>
</dbReference>
<dbReference type="SUPFAM" id="SSF47353">
    <property type="entry name" value="Retrovirus capsid dimerization domain-like"/>
    <property type="match status" value="1"/>
</dbReference>
<dbReference type="PROSITE" id="PS50804">
    <property type="entry name" value="SCAN_BOX"/>
    <property type="match status" value="1"/>
</dbReference>
<dbReference type="PROSITE" id="PS00028">
    <property type="entry name" value="ZINC_FINGER_C2H2_1"/>
    <property type="match status" value="4"/>
</dbReference>
<dbReference type="PROSITE" id="PS50157">
    <property type="entry name" value="ZINC_FINGER_C2H2_2"/>
    <property type="match status" value="4"/>
</dbReference>
<sequence>MSAQSVEEDSILIIPNPDEEEKILRVKLEEDPDGEEGSSISWNHLPDPEIFRQRFRQFGYQDSPGPREAVSQLRELCRLWLRPETHTKEQILELVVLEQFVAILPRELQTLVREHHPENGEEAVTVLEDLESELDDPGQPVSLRRRKREVLVEEIASQEDAQGLPSSELDAVENQLKWASWELHSLRHCDDDATAENGALAPKQEIASAGESHEVPGTLNIGVPQIFKYGETCFPKGRFERKRNPSRKKQHICDECGKHFSQGSALILHQRIHSGEKPYGCVECGKAFSRSSILVQHQRVHTGEKPYKCLECGKAFSQNSGLINHQRIHTGEKPYECVQCGKSYSQSSNLFRHQRRHNAEKLLNVVKV</sequence>
<accession>Q7TNK3</accession>
<evidence type="ECO:0000250" key="1"/>
<evidence type="ECO:0000250" key="2">
    <source>
        <dbReference type="UniProtKB" id="P17028"/>
    </source>
</evidence>
<evidence type="ECO:0000255" key="3">
    <source>
        <dbReference type="PROSITE-ProRule" id="PRU00042"/>
    </source>
</evidence>
<evidence type="ECO:0000255" key="4">
    <source>
        <dbReference type="PROSITE-ProRule" id="PRU00187"/>
    </source>
</evidence>
<evidence type="ECO:0000305" key="5"/>
<keyword id="KW-0238">DNA-binding</keyword>
<keyword id="KW-1017">Isopeptide bond</keyword>
<keyword id="KW-0479">Metal-binding</keyword>
<keyword id="KW-0539">Nucleus</keyword>
<keyword id="KW-0597">Phosphoprotein</keyword>
<keyword id="KW-1185">Reference proteome</keyword>
<keyword id="KW-0677">Repeat</keyword>
<keyword id="KW-0678">Repressor</keyword>
<keyword id="KW-0804">Transcription</keyword>
<keyword id="KW-0805">Transcription regulation</keyword>
<keyword id="KW-0832">Ubl conjugation</keyword>
<keyword id="KW-0862">Zinc</keyword>
<keyword id="KW-0863">Zinc-finger</keyword>
<proteinExistence type="evidence at transcript level"/>
<gene>
    <name type="primary">Znf24</name>
    <name type="synonym">Zfp191</name>
    <name type="synonym">Znf191</name>
</gene>
<protein>
    <recommendedName>
        <fullName>Zinc finger protein 24</fullName>
    </recommendedName>
    <alternativeName>
        <fullName>Zinc finger protein 191</fullName>
        <shortName>Zfp-191</shortName>
    </alternativeName>
</protein>
<reference key="1">
    <citation type="submission" date="2003-07" db="EMBL/GenBank/DDBJ databases">
        <title>Cloning of rat znf191.</title>
        <authorList>
            <person name="Zhou G."/>
            <person name="Li W."/>
            <person name="Yu L."/>
        </authorList>
    </citation>
    <scope>NUCLEOTIDE SEQUENCE [MRNA]</scope>
    <source>
        <strain>Sprague-Dawley</strain>
    </source>
</reference>
<comment type="function">
    <text evidence="1">Transcription factor required for myelination of differentiated oligodendrocytes. Required for the conversion of oligodendrocytes from the premyelinating to the myelinating state. In the developing central nervous system (CNS), involved in the maintenance in the progenitor stage by promoting the cell cycle. Specifically binds to the 5'-TCAT-3' DNA sequence. Has transcription repressor activity in vitro (By similarity).</text>
</comment>
<comment type="subcellular location">
    <subcellularLocation>
        <location evidence="4">Nucleus</location>
    </subcellularLocation>
</comment>
<comment type="PTM">
    <text evidence="1">Sumoylated.</text>
</comment>
<comment type="similarity">
    <text evidence="5">Belongs to the krueppel C2H2-type zinc-finger protein family.</text>
</comment>
<name>ZNF24_RAT</name>
<organism>
    <name type="scientific">Rattus norvegicus</name>
    <name type="common">Rat</name>
    <dbReference type="NCBI Taxonomy" id="10116"/>
    <lineage>
        <taxon>Eukaryota</taxon>
        <taxon>Metazoa</taxon>
        <taxon>Chordata</taxon>
        <taxon>Craniata</taxon>
        <taxon>Vertebrata</taxon>
        <taxon>Euteleostomi</taxon>
        <taxon>Mammalia</taxon>
        <taxon>Eutheria</taxon>
        <taxon>Euarchontoglires</taxon>
        <taxon>Glires</taxon>
        <taxon>Rodentia</taxon>
        <taxon>Myomorpha</taxon>
        <taxon>Muroidea</taxon>
        <taxon>Muridae</taxon>
        <taxon>Murinae</taxon>
        <taxon>Rattus</taxon>
    </lineage>
</organism>
<feature type="chain" id="PRO_0000366922" description="Zinc finger protein 24">
    <location>
        <begin position="1"/>
        <end position="368"/>
    </location>
</feature>
<feature type="domain" description="SCAN box" evidence="4">
    <location>
        <begin position="52"/>
        <end position="134"/>
    </location>
</feature>
<feature type="zinc finger region" description="C2H2-type 1" evidence="3">
    <location>
        <begin position="251"/>
        <end position="273"/>
    </location>
</feature>
<feature type="zinc finger region" description="C2H2-type 2" evidence="3">
    <location>
        <begin position="279"/>
        <end position="301"/>
    </location>
</feature>
<feature type="zinc finger region" description="C2H2-type 3" evidence="3">
    <location>
        <begin position="307"/>
        <end position="329"/>
    </location>
</feature>
<feature type="zinc finger region" description="C2H2-type 4" evidence="3">
    <location>
        <begin position="335"/>
        <end position="357"/>
    </location>
</feature>
<feature type="region of interest" description="Necessary and sufficient for nuclear localization" evidence="1">
    <location>
        <begin position="251"/>
        <end position="301"/>
    </location>
</feature>
<feature type="modified residue" description="Phosphoserine" evidence="2">
    <location>
        <position position="132"/>
    </location>
</feature>
<feature type="modified residue" description="Phosphoserine" evidence="2">
    <location>
        <position position="142"/>
    </location>
</feature>
<feature type="modified residue" description="Phosphoserine" evidence="2">
    <location>
        <position position="274"/>
    </location>
</feature>
<feature type="modified residue" description="Phosphoserine" evidence="2">
    <location>
        <position position="292"/>
    </location>
</feature>
<feature type="modified residue" description="Phosphotyrosine" evidence="2">
    <location>
        <position position="335"/>
    </location>
</feature>
<feature type="cross-link" description="Glycyl lysine isopeptide (Lys-Gly) (interchain with G-Cter in SUMO2)" evidence="2">
    <location>
        <position position="22"/>
    </location>
</feature>
<feature type="cross-link" description="Glycyl lysine isopeptide (Lys-Gly) (interchain with G-Cter in SUMO1); alternate" evidence="2">
    <location>
        <position position="27"/>
    </location>
</feature>
<feature type="cross-link" description="Glycyl lysine isopeptide (Lys-Gly) (interchain with G-Cter in SUMO2); alternate" evidence="2">
    <location>
        <position position="27"/>
    </location>
</feature>
<feature type="cross-link" description="Glycyl lysine isopeptide (Lys-Gly) (interchain with G-Cter in SUMO2)" evidence="2">
    <location>
        <position position="147"/>
    </location>
</feature>
<feature type="cross-link" description="Glycyl lysine isopeptide (Lys-Gly) (interchain with G-Cter in SUMO2)" evidence="2">
    <location>
        <position position="177"/>
    </location>
</feature>
<feature type="cross-link" description="Glycyl lysine isopeptide (Lys-Gly) (interchain with G-Cter in SUMO2)" evidence="2">
    <location>
        <position position="236"/>
    </location>
</feature>
<feature type="cross-link" description="Glycyl lysine isopeptide (Lys-Gly) (interchain with G-Cter in SUMO2)" evidence="2">
    <location>
        <position position="277"/>
    </location>
</feature>
<feature type="cross-link" description="Glycyl lysine isopeptide (Lys-Gly) (interchain with G-Cter in SUMO2)" evidence="2">
    <location>
        <position position="286"/>
    </location>
</feature>
<feature type="cross-link" description="Glycyl lysine isopeptide (Lys-Gly) (interchain with G-Cter in SUMO2)" evidence="2">
    <location>
        <position position="361"/>
    </location>
</feature>
<feature type="cross-link" description="Glycyl lysine isopeptide (Lys-Gly) (interchain with G-Cter in SUMO2)" evidence="2">
    <location>
        <position position="367"/>
    </location>
</feature>